<keyword id="KW-0687">Ribonucleoprotein</keyword>
<keyword id="KW-0689">Ribosomal protein</keyword>
<gene>
    <name evidence="1" type="primary">rpmI</name>
    <name type="ordered locus">BMA10247_0965</name>
</gene>
<sequence>MPKMKTKKSAAKRFVVRPGGTVKRGQAFKRHILTKKTTKNKRHLRGATAVHDSDLNSVRAMLPFA</sequence>
<name>RL35_BURM7</name>
<proteinExistence type="inferred from homology"/>
<reference key="1">
    <citation type="journal article" date="2010" name="Genome Biol. Evol.">
        <title>Continuing evolution of Burkholderia mallei through genome reduction and large-scale rearrangements.</title>
        <authorList>
            <person name="Losada L."/>
            <person name="Ronning C.M."/>
            <person name="DeShazer D."/>
            <person name="Woods D."/>
            <person name="Fedorova N."/>
            <person name="Kim H.S."/>
            <person name="Shabalina S.A."/>
            <person name="Pearson T.R."/>
            <person name="Brinkac L."/>
            <person name="Tan P."/>
            <person name="Nandi T."/>
            <person name="Crabtree J."/>
            <person name="Badger J."/>
            <person name="Beckstrom-Sternberg S."/>
            <person name="Saqib M."/>
            <person name="Schutzer S.E."/>
            <person name="Keim P."/>
            <person name="Nierman W.C."/>
        </authorList>
    </citation>
    <scope>NUCLEOTIDE SEQUENCE [LARGE SCALE GENOMIC DNA]</scope>
    <source>
        <strain>NCTC 10247</strain>
    </source>
</reference>
<accession>A3MJU0</accession>
<dbReference type="EMBL" id="CP000548">
    <property type="protein sequence ID" value="ABO07213.1"/>
    <property type="molecule type" value="Genomic_DNA"/>
</dbReference>
<dbReference type="RefSeq" id="WP_004191477.1">
    <property type="nucleotide sequence ID" value="NZ_CP007802.1"/>
</dbReference>
<dbReference type="SMR" id="A3MJU0"/>
<dbReference type="GeneID" id="98102115"/>
<dbReference type="KEGG" id="bmaz:BM44_2121"/>
<dbReference type="KEGG" id="bmn:BMA10247_0965"/>
<dbReference type="PATRIC" id="fig|320389.8.peg.2376"/>
<dbReference type="GO" id="GO:0022625">
    <property type="term" value="C:cytosolic large ribosomal subunit"/>
    <property type="evidence" value="ECO:0007669"/>
    <property type="project" value="TreeGrafter"/>
</dbReference>
<dbReference type="GO" id="GO:0003735">
    <property type="term" value="F:structural constituent of ribosome"/>
    <property type="evidence" value="ECO:0007669"/>
    <property type="project" value="InterPro"/>
</dbReference>
<dbReference type="GO" id="GO:0006412">
    <property type="term" value="P:translation"/>
    <property type="evidence" value="ECO:0007669"/>
    <property type="project" value="UniProtKB-UniRule"/>
</dbReference>
<dbReference type="FunFam" id="4.10.410.60:FF:000001">
    <property type="entry name" value="50S ribosomal protein L35"/>
    <property type="match status" value="1"/>
</dbReference>
<dbReference type="Gene3D" id="4.10.410.60">
    <property type="match status" value="1"/>
</dbReference>
<dbReference type="HAMAP" id="MF_00514">
    <property type="entry name" value="Ribosomal_bL35"/>
    <property type="match status" value="1"/>
</dbReference>
<dbReference type="InterPro" id="IPR001706">
    <property type="entry name" value="Ribosomal_bL35"/>
</dbReference>
<dbReference type="InterPro" id="IPR021137">
    <property type="entry name" value="Ribosomal_bL35-like"/>
</dbReference>
<dbReference type="InterPro" id="IPR018265">
    <property type="entry name" value="Ribosomal_bL35_CS"/>
</dbReference>
<dbReference type="InterPro" id="IPR037229">
    <property type="entry name" value="Ribosomal_bL35_sf"/>
</dbReference>
<dbReference type="NCBIfam" id="TIGR00001">
    <property type="entry name" value="rpmI_bact"/>
    <property type="match status" value="1"/>
</dbReference>
<dbReference type="PANTHER" id="PTHR33343">
    <property type="entry name" value="54S RIBOSOMAL PROTEIN BL35M"/>
    <property type="match status" value="1"/>
</dbReference>
<dbReference type="PANTHER" id="PTHR33343:SF1">
    <property type="entry name" value="LARGE RIBOSOMAL SUBUNIT PROTEIN BL35M"/>
    <property type="match status" value="1"/>
</dbReference>
<dbReference type="Pfam" id="PF01632">
    <property type="entry name" value="Ribosomal_L35p"/>
    <property type="match status" value="1"/>
</dbReference>
<dbReference type="PRINTS" id="PR00064">
    <property type="entry name" value="RIBOSOMALL35"/>
</dbReference>
<dbReference type="SUPFAM" id="SSF143034">
    <property type="entry name" value="L35p-like"/>
    <property type="match status" value="1"/>
</dbReference>
<dbReference type="PROSITE" id="PS00936">
    <property type="entry name" value="RIBOSOMAL_L35"/>
    <property type="match status" value="1"/>
</dbReference>
<organism>
    <name type="scientific">Burkholderia mallei (strain NCTC 10247)</name>
    <dbReference type="NCBI Taxonomy" id="320389"/>
    <lineage>
        <taxon>Bacteria</taxon>
        <taxon>Pseudomonadati</taxon>
        <taxon>Pseudomonadota</taxon>
        <taxon>Betaproteobacteria</taxon>
        <taxon>Burkholderiales</taxon>
        <taxon>Burkholderiaceae</taxon>
        <taxon>Burkholderia</taxon>
        <taxon>pseudomallei group</taxon>
    </lineage>
</organism>
<feature type="chain" id="PRO_1000050666" description="Large ribosomal subunit protein bL35">
    <location>
        <begin position="1"/>
        <end position="65"/>
    </location>
</feature>
<evidence type="ECO:0000255" key="1">
    <source>
        <dbReference type="HAMAP-Rule" id="MF_00514"/>
    </source>
</evidence>
<evidence type="ECO:0000305" key="2"/>
<comment type="similarity">
    <text evidence="1">Belongs to the bacterial ribosomal protein bL35 family.</text>
</comment>
<protein>
    <recommendedName>
        <fullName evidence="1">Large ribosomal subunit protein bL35</fullName>
    </recommendedName>
    <alternativeName>
        <fullName evidence="2">50S ribosomal protein L35</fullName>
    </alternativeName>
</protein>